<dbReference type="EMBL" id="CP000026">
    <property type="protein sequence ID" value="AAV76735.1"/>
    <property type="molecule type" value="Genomic_DNA"/>
</dbReference>
<dbReference type="RefSeq" id="WP_001210080.1">
    <property type="nucleotide sequence ID" value="NC_006511.1"/>
</dbReference>
<dbReference type="SMR" id="Q5PDW8"/>
<dbReference type="KEGG" id="spt:SPA0737"/>
<dbReference type="HOGENOM" id="CLU_002755_1_2_6"/>
<dbReference type="Proteomes" id="UP000008185">
    <property type="component" value="Chromosome"/>
</dbReference>
<dbReference type="GO" id="GO:0005886">
    <property type="term" value="C:plasma membrane"/>
    <property type="evidence" value="ECO:0007669"/>
    <property type="project" value="UniProtKB-SubCell"/>
</dbReference>
<dbReference type="GO" id="GO:0042910">
    <property type="term" value="F:xenobiotic transmembrane transporter activity"/>
    <property type="evidence" value="ECO:0007669"/>
    <property type="project" value="TreeGrafter"/>
</dbReference>
<dbReference type="FunFam" id="1.20.1640.10:FF:000001">
    <property type="entry name" value="Efflux pump membrane transporter"/>
    <property type="match status" value="1"/>
</dbReference>
<dbReference type="FunFam" id="3.30.70.1430:FF:000001">
    <property type="entry name" value="Efflux pump membrane transporter"/>
    <property type="match status" value="1"/>
</dbReference>
<dbReference type="FunFam" id="3.30.2090.10:FF:000004">
    <property type="entry name" value="Multidrug resistance protein MdtC"/>
    <property type="match status" value="1"/>
</dbReference>
<dbReference type="FunFam" id="3.30.2090.10:FF:000005">
    <property type="entry name" value="Multidrug resistance protein MdtC"/>
    <property type="match status" value="1"/>
</dbReference>
<dbReference type="FunFam" id="3.30.70.1430:FF:000004">
    <property type="entry name" value="Multidrug resistance protein MdtC"/>
    <property type="match status" value="1"/>
</dbReference>
<dbReference type="Gene3D" id="3.30.70.1430">
    <property type="entry name" value="Multidrug efflux transporter AcrB pore domain"/>
    <property type="match status" value="2"/>
</dbReference>
<dbReference type="Gene3D" id="3.30.70.1440">
    <property type="entry name" value="Multidrug efflux transporter AcrB pore domain"/>
    <property type="match status" value="1"/>
</dbReference>
<dbReference type="Gene3D" id="3.30.70.1320">
    <property type="entry name" value="Multidrug efflux transporter AcrB pore domain like"/>
    <property type="match status" value="1"/>
</dbReference>
<dbReference type="Gene3D" id="3.30.2090.10">
    <property type="entry name" value="Multidrug efflux transporter AcrB TolC docking domain, DN and DC subdomains"/>
    <property type="match status" value="2"/>
</dbReference>
<dbReference type="Gene3D" id="1.20.1640.10">
    <property type="entry name" value="Multidrug efflux transporter AcrB transmembrane domain"/>
    <property type="match status" value="2"/>
</dbReference>
<dbReference type="HAMAP" id="MF_01424">
    <property type="entry name" value="MdtC"/>
    <property type="match status" value="1"/>
</dbReference>
<dbReference type="InterPro" id="IPR027463">
    <property type="entry name" value="AcrB_DN_DC_subdom"/>
</dbReference>
<dbReference type="InterPro" id="IPR001036">
    <property type="entry name" value="Acrflvin-R"/>
</dbReference>
<dbReference type="InterPro" id="IPR023931">
    <property type="entry name" value="Multidrug-R_MdtC"/>
</dbReference>
<dbReference type="NCBIfam" id="NF007905">
    <property type="entry name" value="PRK10614.1"/>
    <property type="match status" value="1"/>
</dbReference>
<dbReference type="NCBIfam" id="NF033617">
    <property type="entry name" value="RND_permease_2"/>
    <property type="match status" value="1"/>
</dbReference>
<dbReference type="PANTHER" id="PTHR32063">
    <property type="match status" value="1"/>
</dbReference>
<dbReference type="PANTHER" id="PTHR32063:SF34">
    <property type="entry name" value="MULTIDRUG RESISTANCE PROTEIN MDTC"/>
    <property type="match status" value="1"/>
</dbReference>
<dbReference type="Pfam" id="PF00873">
    <property type="entry name" value="ACR_tran"/>
    <property type="match status" value="1"/>
</dbReference>
<dbReference type="PRINTS" id="PR00702">
    <property type="entry name" value="ACRIFLAVINRP"/>
</dbReference>
<dbReference type="SUPFAM" id="SSF82693">
    <property type="entry name" value="Multidrug efflux transporter AcrB pore domain, PN1, PN2, PC1 and PC2 subdomains"/>
    <property type="match status" value="4"/>
</dbReference>
<dbReference type="SUPFAM" id="SSF82714">
    <property type="entry name" value="Multidrug efflux transporter AcrB TolC docking domain, DN and DC subdomains"/>
    <property type="match status" value="2"/>
</dbReference>
<dbReference type="SUPFAM" id="SSF82866">
    <property type="entry name" value="Multidrug efflux transporter AcrB transmembrane domain"/>
    <property type="match status" value="2"/>
</dbReference>
<gene>
    <name evidence="1" type="primary">mdtC</name>
    <name type="ordered locus">SPA0737</name>
</gene>
<name>MDTC_SALPA</name>
<feature type="chain" id="PRO_1000024316" description="Multidrug resistance protein MdtC">
    <location>
        <begin position="1"/>
        <end position="1026"/>
    </location>
</feature>
<feature type="transmembrane region" description="Helical" evidence="1">
    <location>
        <begin position="15"/>
        <end position="35"/>
    </location>
</feature>
<feature type="transmembrane region" description="Helical" evidence="1">
    <location>
        <begin position="333"/>
        <end position="353"/>
    </location>
</feature>
<feature type="transmembrane region" description="Helical" evidence="1">
    <location>
        <begin position="360"/>
        <end position="380"/>
    </location>
</feature>
<feature type="transmembrane region" description="Helical" evidence="1">
    <location>
        <begin position="387"/>
        <end position="407"/>
    </location>
</feature>
<feature type="transmembrane region" description="Helical" evidence="1">
    <location>
        <begin position="431"/>
        <end position="451"/>
    </location>
</feature>
<feature type="transmembrane region" description="Helical" evidence="1">
    <location>
        <begin position="463"/>
        <end position="483"/>
    </location>
</feature>
<feature type="transmembrane region" description="Helical" evidence="1">
    <location>
        <begin position="528"/>
        <end position="548"/>
    </location>
</feature>
<feature type="transmembrane region" description="Helical" evidence="1">
    <location>
        <begin position="853"/>
        <end position="873"/>
    </location>
</feature>
<feature type="transmembrane region" description="Helical" evidence="1">
    <location>
        <begin position="897"/>
        <end position="917"/>
    </location>
</feature>
<feature type="transmembrane region" description="Helical" evidence="1">
    <location>
        <begin position="953"/>
        <end position="973"/>
    </location>
</feature>
<feature type="transmembrane region" description="Helical" evidence="1">
    <location>
        <begin position="984"/>
        <end position="1004"/>
    </location>
</feature>
<sequence length="1026" mass="111137">MRFFALFIYRPVATILIAAAITLCGILGFRLLPVAPLPQVDFPVIMVSASLPGASPETMASSVATPLERSLGRIAGVNEMTSSSSLGSTRIILEFNFDRDINGAARDVQAAINAAQSLLPGGMPSRPTYRKANPSDAPIMILTLTSESWSQGKLYDFASTQLAQTIAQIDGVGDVDVGGSSLPAVRVGLNPQALFNQGVSLDEVREAIDSANVRRPQGAIEDSVHRWQIQTNDELKTAAEYQPLIIHYNNGAAVRLGDVASVTDSVQDVRNAGMTNAKPAILLMIRKLPEANIIQTVDGIRAKLPELRAMIPAAIDLQIAQDRSPTIRASLQEVEETLAISVALVILVVFLFLRSGRATLIPAVAVPVSLIGTFAAMYLCGFSLNNLSLMALTIATGFVVDDAIVVLENIARHLEAGMKPLQAALQGTREVGFTVISMSLSLVAVFLPLLLMGGLPGRLLREFAVTLSVAIGISLVVSLTLTPMMCGWMLKSSKPRTQPRKRGVGRLLVALQQGYGTSLKWVLNHTRLVGVVFLGTVALNIWLYIAIPKTFFPEQDTGVLMGGIQADQSISFQAMRGKLQDFMKIIRDDPAVNNVTGFTGGSRVNSGMMFITLKPRGERKETAQQIIDRLRVKLAKEPGARLFLMAVQDIRVGGRQANASYQYTLLSDSLPALREWEPKIRKALSALPQLADVNSDQQDNGAEMNLIYDRDTMSRLGIDVQAANSLLNNTFGQRQISTIYQPMNQYKVVMEVDPRYTQDISALEKMFVINRDGKAIPLSYFAQWRPANAPLSVNHQGLSAASTIAFNLPTGTSLSQATEAINRTMTQLGVPSTVRGSFSGTAQVFQQTMNSQLILIVAAIATVYIVLEILYESYVHPLTILSTLPSASVGALLALELFNAPFSLIALIGIMLLIGIVKKNAIMMVDFALEAQRSGGLTPEQAIFQACLLRFRPIMMTTLAALFGALPLVLSGGDGSELRQPLGITIVGGLVMSQLLTLYTTPVVYLFFDRLRLRFSRKNSKPVVEI</sequence>
<accession>Q5PDW8</accession>
<reference key="1">
    <citation type="journal article" date="2004" name="Nat. Genet.">
        <title>Comparison of genome degradation in Paratyphi A and Typhi, human-restricted serovars of Salmonella enterica that cause typhoid.</title>
        <authorList>
            <person name="McClelland M."/>
            <person name="Sanderson K.E."/>
            <person name="Clifton S.W."/>
            <person name="Latreille P."/>
            <person name="Porwollik S."/>
            <person name="Sabo A."/>
            <person name="Meyer R."/>
            <person name="Bieri T."/>
            <person name="Ozersky P."/>
            <person name="McLellan M."/>
            <person name="Harkins C.R."/>
            <person name="Wang C."/>
            <person name="Nguyen C."/>
            <person name="Berghoff A."/>
            <person name="Elliott G."/>
            <person name="Kohlberg S."/>
            <person name="Strong C."/>
            <person name="Du F."/>
            <person name="Carter J."/>
            <person name="Kremizki C."/>
            <person name="Layman D."/>
            <person name="Leonard S."/>
            <person name="Sun H."/>
            <person name="Fulton L."/>
            <person name="Nash W."/>
            <person name="Miner T."/>
            <person name="Minx P."/>
            <person name="Delehaunty K."/>
            <person name="Fronick C."/>
            <person name="Magrini V."/>
            <person name="Nhan M."/>
            <person name="Warren W."/>
            <person name="Florea L."/>
            <person name="Spieth J."/>
            <person name="Wilson R.K."/>
        </authorList>
    </citation>
    <scope>NUCLEOTIDE SEQUENCE [LARGE SCALE GENOMIC DNA]</scope>
    <source>
        <strain>ATCC 9150 / SARB42</strain>
    </source>
</reference>
<proteinExistence type="inferred from homology"/>
<organism>
    <name type="scientific">Salmonella paratyphi A (strain ATCC 9150 / SARB42)</name>
    <dbReference type="NCBI Taxonomy" id="295319"/>
    <lineage>
        <taxon>Bacteria</taxon>
        <taxon>Pseudomonadati</taxon>
        <taxon>Pseudomonadota</taxon>
        <taxon>Gammaproteobacteria</taxon>
        <taxon>Enterobacterales</taxon>
        <taxon>Enterobacteriaceae</taxon>
        <taxon>Salmonella</taxon>
    </lineage>
</organism>
<keyword id="KW-0997">Cell inner membrane</keyword>
<keyword id="KW-1003">Cell membrane</keyword>
<keyword id="KW-0472">Membrane</keyword>
<keyword id="KW-0812">Transmembrane</keyword>
<keyword id="KW-1133">Transmembrane helix</keyword>
<keyword id="KW-0813">Transport</keyword>
<protein>
    <recommendedName>
        <fullName evidence="1">Multidrug resistance protein MdtC</fullName>
    </recommendedName>
    <alternativeName>
        <fullName evidence="1">Multidrug transporter MdtC</fullName>
    </alternativeName>
</protein>
<comment type="subunit">
    <text evidence="1">Part of a tripartite efflux system composed of MdtA, MdtB and MdtC. MdtC forms a heteromultimer with MdtB.</text>
</comment>
<comment type="subcellular location">
    <subcellularLocation>
        <location evidence="1">Cell inner membrane</location>
        <topology evidence="1">Multi-pass membrane protein</topology>
    </subcellularLocation>
</comment>
<comment type="similarity">
    <text evidence="1">Belongs to the resistance-nodulation-cell division (RND) (TC 2.A.6) family. MdtC subfamily.</text>
</comment>
<evidence type="ECO:0000255" key="1">
    <source>
        <dbReference type="HAMAP-Rule" id="MF_01424"/>
    </source>
</evidence>